<protein>
    <recommendedName>
        <fullName>Lysine--tRNA ligase</fullName>
        <ecNumber>6.1.1.6</ecNumber>
    </recommendedName>
    <alternativeName>
        <fullName>Lysyl-tRNA synthetase</fullName>
        <shortName>LysRS</shortName>
    </alternativeName>
</protein>
<sequence length="509" mass="58079">MAQPNVQSTSEPILSENDLIAQRHAKLKQIQDKAKETGKSVWPNTFKREHYAADLQEQFKDIDKAQIEGSDKTYVKVAGRVMLNRGSFMVIQDMTGRIQLYVDRKGLPADTLETIKSLDLGDIIAAEGYIGRSGKGDLYVHLEGFELLTKSLRPLPDKFHGLTDTEAKYRKRYLDLIVNEETRKTFEIRAQVVAGIRAFLTNQRFMEVETPMMHVIPGGASAQPFVTHHNALDMELYLRIAPELYLKRLVVGGFERVFEINRNFRNEGVSTRHNPEFTMIEFYQAYADYKDLMQLTENMLEKLALDILGTTDVPYGDEVYSFKGPFKKISMFDAILEHNPDFTPENVNDREFLAKFTQDVLKEQVKPGFGLGKLQTIVFEETVETKLRQPTFITEYPAETSPLARRNDDNPHITDRFEFFIGGRELANGFSELNDPIDQAERFQAQVAEKDAGDDEAMHYDADFIEALEYGLPPTAGQGIGIDRLVMIFANAPSIRDVLLFPHMRRKDV</sequence>
<name>SYK_ACIAD</name>
<reference key="1">
    <citation type="journal article" date="1997" name="Gene">
        <title>Nucleotide sequence of a putative periplasmic Mn superoxide dismutase from Acinetobacter calcoaceticus ADP1.</title>
        <authorList>
            <person name="Geissdoerfer W."/>
            <person name="Ratajczak A."/>
            <person name="Hillen W."/>
        </authorList>
    </citation>
    <scope>NUCLEOTIDE SEQUENCE [GENOMIC DNA]</scope>
</reference>
<reference key="2">
    <citation type="journal article" date="2004" name="Nucleic Acids Res.">
        <title>Unique features revealed by the genome sequence of Acinetobacter sp. ADP1, a versatile and naturally transformation competent bacterium.</title>
        <authorList>
            <person name="Barbe V."/>
            <person name="Vallenet D."/>
            <person name="Fonknechten N."/>
            <person name="Kreimeyer A."/>
            <person name="Oztas S."/>
            <person name="Labarre L."/>
            <person name="Cruveiller S."/>
            <person name="Robert C."/>
            <person name="Duprat S."/>
            <person name="Wincker P."/>
            <person name="Ornston L.N."/>
            <person name="Weissenbach J."/>
            <person name="Marliere P."/>
            <person name="Cohen G.N."/>
            <person name="Medigue C."/>
        </authorList>
    </citation>
    <scope>NUCLEOTIDE SEQUENCE [LARGE SCALE GENOMIC DNA]</scope>
    <source>
        <strain>ATCC 33305 / BD413 / ADP1</strain>
    </source>
</reference>
<gene>
    <name type="primary">lysS</name>
    <name type="ordered locus">ACIAD1069</name>
</gene>
<accession>Q43990</accession>
<comment type="catalytic activity">
    <reaction>
        <text>tRNA(Lys) + L-lysine + ATP = L-lysyl-tRNA(Lys) + AMP + diphosphate</text>
        <dbReference type="Rhea" id="RHEA:20792"/>
        <dbReference type="Rhea" id="RHEA-COMP:9696"/>
        <dbReference type="Rhea" id="RHEA-COMP:9697"/>
        <dbReference type="ChEBI" id="CHEBI:30616"/>
        <dbReference type="ChEBI" id="CHEBI:32551"/>
        <dbReference type="ChEBI" id="CHEBI:33019"/>
        <dbReference type="ChEBI" id="CHEBI:78442"/>
        <dbReference type="ChEBI" id="CHEBI:78529"/>
        <dbReference type="ChEBI" id="CHEBI:456215"/>
        <dbReference type="EC" id="6.1.1.6"/>
    </reaction>
</comment>
<comment type="cofactor">
    <cofactor evidence="1">
        <name>Mg(2+)</name>
        <dbReference type="ChEBI" id="CHEBI:18420"/>
    </cofactor>
    <text evidence="1">Binds 3 Mg(2+) ions per subunit.</text>
</comment>
<comment type="subunit">
    <text evidence="1">Homodimer.</text>
</comment>
<comment type="subcellular location">
    <subcellularLocation>
        <location evidence="1">Cytoplasm</location>
    </subcellularLocation>
</comment>
<comment type="similarity">
    <text evidence="2">Belongs to the class-II aminoacyl-tRNA synthetase family.</text>
</comment>
<proteinExistence type="inferred from homology"/>
<keyword id="KW-0030">Aminoacyl-tRNA synthetase</keyword>
<keyword id="KW-0067">ATP-binding</keyword>
<keyword id="KW-0963">Cytoplasm</keyword>
<keyword id="KW-0436">Ligase</keyword>
<keyword id="KW-0460">Magnesium</keyword>
<keyword id="KW-0479">Metal-binding</keyword>
<keyword id="KW-0547">Nucleotide-binding</keyword>
<keyword id="KW-0648">Protein biosynthesis</keyword>
<feature type="chain" id="PRO_0000152592" description="Lysine--tRNA ligase">
    <location>
        <begin position="1"/>
        <end position="509"/>
    </location>
</feature>
<feature type="binding site" evidence="1">
    <location>
        <position position="418"/>
    </location>
    <ligand>
        <name>Mg(2+)</name>
        <dbReference type="ChEBI" id="CHEBI:18420"/>
        <label>1</label>
    </ligand>
</feature>
<feature type="binding site" evidence="1">
    <location>
        <position position="425"/>
    </location>
    <ligand>
        <name>Mg(2+)</name>
        <dbReference type="ChEBI" id="CHEBI:18420"/>
        <label>1</label>
    </ligand>
</feature>
<feature type="binding site" evidence="1">
    <location>
        <position position="425"/>
    </location>
    <ligand>
        <name>Mg(2+)</name>
        <dbReference type="ChEBI" id="CHEBI:18420"/>
        <label>2</label>
    </ligand>
</feature>
<organism>
    <name type="scientific">Acinetobacter baylyi (strain ATCC 33305 / BD413 / ADP1)</name>
    <dbReference type="NCBI Taxonomy" id="62977"/>
    <lineage>
        <taxon>Bacteria</taxon>
        <taxon>Pseudomonadati</taxon>
        <taxon>Pseudomonadota</taxon>
        <taxon>Gammaproteobacteria</taxon>
        <taxon>Moraxellales</taxon>
        <taxon>Moraxellaceae</taxon>
        <taxon>Acinetobacter</taxon>
    </lineage>
</organism>
<evidence type="ECO:0000250" key="1"/>
<evidence type="ECO:0000305" key="2"/>
<dbReference type="EC" id="6.1.1.6"/>
<dbReference type="EMBL" id="Z46863">
    <property type="protein sequence ID" value="CAA86924.1"/>
    <property type="molecule type" value="Genomic_DNA"/>
</dbReference>
<dbReference type="EMBL" id="CR543861">
    <property type="protein sequence ID" value="CAG67956.1"/>
    <property type="molecule type" value="Genomic_DNA"/>
</dbReference>
<dbReference type="RefSeq" id="WP_004921630.1">
    <property type="nucleotide sequence ID" value="NC_005966.1"/>
</dbReference>
<dbReference type="SMR" id="Q43990"/>
<dbReference type="STRING" id="202950.GCA_001485005_01297"/>
<dbReference type="GeneID" id="45233510"/>
<dbReference type="KEGG" id="aci:ACIAD1069"/>
<dbReference type="eggNOG" id="COG1190">
    <property type="taxonomic scope" value="Bacteria"/>
</dbReference>
<dbReference type="HOGENOM" id="CLU_008255_6_0_6"/>
<dbReference type="OrthoDB" id="9801152at2"/>
<dbReference type="BioCyc" id="ASP62977:ACIAD_RS04925-MONOMER"/>
<dbReference type="Proteomes" id="UP000000430">
    <property type="component" value="Chromosome"/>
</dbReference>
<dbReference type="GO" id="GO:0005829">
    <property type="term" value="C:cytosol"/>
    <property type="evidence" value="ECO:0007669"/>
    <property type="project" value="TreeGrafter"/>
</dbReference>
<dbReference type="GO" id="GO:0005524">
    <property type="term" value="F:ATP binding"/>
    <property type="evidence" value="ECO:0007669"/>
    <property type="project" value="UniProtKB-UniRule"/>
</dbReference>
<dbReference type="GO" id="GO:0004824">
    <property type="term" value="F:lysine-tRNA ligase activity"/>
    <property type="evidence" value="ECO:0007669"/>
    <property type="project" value="UniProtKB-UniRule"/>
</dbReference>
<dbReference type="GO" id="GO:0000287">
    <property type="term" value="F:magnesium ion binding"/>
    <property type="evidence" value="ECO:0007669"/>
    <property type="project" value="UniProtKB-UniRule"/>
</dbReference>
<dbReference type="GO" id="GO:0000049">
    <property type="term" value="F:tRNA binding"/>
    <property type="evidence" value="ECO:0007669"/>
    <property type="project" value="TreeGrafter"/>
</dbReference>
<dbReference type="GO" id="GO:0006430">
    <property type="term" value="P:lysyl-tRNA aminoacylation"/>
    <property type="evidence" value="ECO:0007669"/>
    <property type="project" value="UniProtKB-UniRule"/>
</dbReference>
<dbReference type="CDD" id="cd00775">
    <property type="entry name" value="LysRS_core"/>
    <property type="match status" value="1"/>
</dbReference>
<dbReference type="CDD" id="cd04322">
    <property type="entry name" value="LysRS_N"/>
    <property type="match status" value="1"/>
</dbReference>
<dbReference type="FunFam" id="3.30.930.10:FF:000001">
    <property type="entry name" value="Lysine--tRNA ligase"/>
    <property type="match status" value="1"/>
</dbReference>
<dbReference type="Gene3D" id="3.30.930.10">
    <property type="entry name" value="Bira Bifunctional Protein, Domain 2"/>
    <property type="match status" value="1"/>
</dbReference>
<dbReference type="Gene3D" id="2.40.50.140">
    <property type="entry name" value="Nucleic acid-binding proteins"/>
    <property type="match status" value="1"/>
</dbReference>
<dbReference type="HAMAP" id="MF_00252">
    <property type="entry name" value="Lys_tRNA_synth_class2"/>
    <property type="match status" value="1"/>
</dbReference>
<dbReference type="InterPro" id="IPR004364">
    <property type="entry name" value="Aa-tRNA-synt_II"/>
</dbReference>
<dbReference type="InterPro" id="IPR006195">
    <property type="entry name" value="aa-tRNA-synth_II"/>
</dbReference>
<dbReference type="InterPro" id="IPR045864">
    <property type="entry name" value="aa-tRNA-synth_II/BPL/LPL"/>
</dbReference>
<dbReference type="InterPro" id="IPR002313">
    <property type="entry name" value="Lys-tRNA-ligase_II"/>
</dbReference>
<dbReference type="InterPro" id="IPR044136">
    <property type="entry name" value="Lys-tRNA-ligase_II_N"/>
</dbReference>
<dbReference type="InterPro" id="IPR018149">
    <property type="entry name" value="Lys-tRNA-synth_II_C"/>
</dbReference>
<dbReference type="InterPro" id="IPR012340">
    <property type="entry name" value="NA-bd_OB-fold"/>
</dbReference>
<dbReference type="InterPro" id="IPR004365">
    <property type="entry name" value="NA-bd_OB_tRNA"/>
</dbReference>
<dbReference type="NCBIfam" id="TIGR00499">
    <property type="entry name" value="lysS_bact"/>
    <property type="match status" value="1"/>
</dbReference>
<dbReference type="NCBIfam" id="NF001756">
    <property type="entry name" value="PRK00484.1"/>
    <property type="match status" value="1"/>
</dbReference>
<dbReference type="PANTHER" id="PTHR42918:SF15">
    <property type="entry name" value="LYSINE--TRNA LIGASE, CHLOROPLASTIC_MITOCHONDRIAL"/>
    <property type="match status" value="1"/>
</dbReference>
<dbReference type="PANTHER" id="PTHR42918">
    <property type="entry name" value="LYSYL-TRNA SYNTHETASE"/>
    <property type="match status" value="1"/>
</dbReference>
<dbReference type="Pfam" id="PF00152">
    <property type="entry name" value="tRNA-synt_2"/>
    <property type="match status" value="1"/>
</dbReference>
<dbReference type="Pfam" id="PF01336">
    <property type="entry name" value="tRNA_anti-codon"/>
    <property type="match status" value="1"/>
</dbReference>
<dbReference type="PRINTS" id="PR00982">
    <property type="entry name" value="TRNASYNTHLYS"/>
</dbReference>
<dbReference type="SUPFAM" id="SSF55681">
    <property type="entry name" value="Class II aaRS and biotin synthetases"/>
    <property type="match status" value="1"/>
</dbReference>
<dbReference type="SUPFAM" id="SSF50249">
    <property type="entry name" value="Nucleic acid-binding proteins"/>
    <property type="match status" value="1"/>
</dbReference>
<dbReference type="PROSITE" id="PS50862">
    <property type="entry name" value="AA_TRNA_LIGASE_II"/>
    <property type="match status" value="1"/>
</dbReference>